<proteinExistence type="inferred from homology"/>
<sequence length="160" mass="17620">MAEVLQSLDALGAANVAAVQPDAPVHVQKLDKYGRAYATGKRKNAVARVWVRPGTGKVTINDRDIEVYFARPVLRLMINQPFQAAAREGQYDVVCTVSGGGLSGQAGAVRHGISKALTYYEPELRSPLKKGGFITRDSRVVERKKYGRAKARRSFQFSKR</sequence>
<comment type="similarity">
    <text evidence="1">Belongs to the universal ribosomal protein uS9 family.</text>
</comment>
<evidence type="ECO:0000255" key="1">
    <source>
        <dbReference type="HAMAP-Rule" id="MF_00532"/>
    </source>
</evidence>
<evidence type="ECO:0000305" key="2"/>
<reference key="1">
    <citation type="submission" date="2007-07" db="EMBL/GenBank/DDBJ databases">
        <title>Complete sequence of chromosome of Xanthobacter autotrophicus Py2.</title>
        <authorList>
            <consortium name="US DOE Joint Genome Institute"/>
            <person name="Copeland A."/>
            <person name="Lucas S."/>
            <person name="Lapidus A."/>
            <person name="Barry K."/>
            <person name="Glavina del Rio T."/>
            <person name="Hammon N."/>
            <person name="Israni S."/>
            <person name="Dalin E."/>
            <person name="Tice H."/>
            <person name="Pitluck S."/>
            <person name="Sims D."/>
            <person name="Brettin T."/>
            <person name="Bruce D."/>
            <person name="Detter J.C."/>
            <person name="Han C."/>
            <person name="Tapia R."/>
            <person name="Brainard J."/>
            <person name="Schmutz J."/>
            <person name="Larimer F."/>
            <person name="Land M."/>
            <person name="Hauser L."/>
            <person name="Kyrpides N."/>
            <person name="Kim E."/>
            <person name="Ensigns S.A."/>
            <person name="Richardson P."/>
        </authorList>
    </citation>
    <scope>NUCLEOTIDE SEQUENCE [LARGE SCALE GENOMIC DNA]</scope>
    <source>
        <strain>ATCC BAA-1158 / Py2</strain>
    </source>
</reference>
<accession>A7INH2</accession>
<organism>
    <name type="scientific">Xanthobacter autotrophicus (strain ATCC BAA-1158 / Py2)</name>
    <dbReference type="NCBI Taxonomy" id="78245"/>
    <lineage>
        <taxon>Bacteria</taxon>
        <taxon>Pseudomonadati</taxon>
        <taxon>Pseudomonadota</taxon>
        <taxon>Alphaproteobacteria</taxon>
        <taxon>Hyphomicrobiales</taxon>
        <taxon>Xanthobacteraceae</taxon>
        <taxon>Xanthobacter</taxon>
    </lineage>
</organism>
<gene>
    <name evidence="1" type="primary">rpsI</name>
    <name type="ordered locus">Xaut_4345</name>
</gene>
<protein>
    <recommendedName>
        <fullName evidence="1">Small ribosomal subunit protein uS9</fullName>
    </recommendedName>
    <alternativeName>
        <fullName evidence="2">30S ribosomal protein S9</fullName>
    </alternativeName>
</protein>
<keyword id="KW-1185">Reference proteome</keyword>
<keyword id="KW-0687">Ribonucleoprotein</keyword>
<keyword id="KW-0689">Ribosomal protein</keyword>
<name>RS9_XANP2</name>
<dbReference type="EMBL" id="CP000781">
    <property type="protein sequence ID" value="ABS69566.1"/>
    <property type="molecule type" value="Genomic_DNA"/>
</dbReference>
<dbReference type="SMR" id="A7INH2"/>
<dbReference type="STRING" id="78245.Xaut_4345"/>
<dbReference type="KEGG" id="xau:Xaut_4345"/>
<dbReference type="eggNOG" id="COG0103">
    <property type="taxonomic scope" value="Bacteria"/>
</dbReference>
<dbReference type="HOGENOM" id="CLU_046483_2_0_5"/>
<dbReference type="OrthoDB" id="9803965at2"/>
<dbReference type="PhylomeDB" id="A7INH2"/>
<dbReference type="Proteomes" id="UP000002417">
    <property type="component" value="Chromosome"/>
</dbReference>
<dbReference type="GO" id="GO:0022627">
    <property type="term" value="C:cytosolic small ribosomal subunit"/>
    <property type="evidence" value="ECO:0007669"/>
    <property type="project" value="TreeGrafter"/>
</dbReference>
<dbReference type="GO" id="GO:0003723">
    <property type="term" value="F:RNA binding"/>
    <property type="evidence" value="ECO:0007669"/>
    <property type="project" value="TreeGrafter"/>
</dbReference>
<dbReference type="GO" id="GO:0003735">
    <property type="term" value="F:structural constituent of ribosome"/>
    <property type="evidence" value="ECO:0007669"/>
    <property type="project" value="InterPro"/>
</dbReference>
<dbReference type="GO" id="GO:0006412">
    <property type="term" value="P:translation"/>
    <property type="evidence" value="ECO:0007669"/>
    <property type="project" value="UniProtKB-UniRule"/>
</dbReference>
<dbReference type="FunFam" id="3.30.230.10:FF:000034">
    <property type="entry name" value="30S ribosomal protein S9"/>
    <property type="match status" value="1"/>
</dbReference>
<dbReference type="Gene3D" id="3.30.230.10">
    <property type="match status" value="1"/>
</dbReference>
<dbReference type="HAMAP" id="MF_00532_B">
    <property type="entry name" value="Ribosomal_uS9_B"/>
    <property type="match status" value="1"/>
</dbReference>
<dbReference type="InterPro" id="IPR020568">
    <property type="entry name" value="Ribosomal_Su5_D2-typ_SF"/>
</dbReference>
<dbReference type="InterPro" id="IPR000754">
    <property type="entry name" value="Ribosomal_uS9"/>
</dbReference>
<dbReference type="InterPro" id="IPR023035">
    <property type="entry name" value="Ribosomal_uS9_bac/plastid"/>
</dbReference>
<dbReference type="InterPro" id="IPR020574">
    <property type="entry name" value="Ribosomal_uS9_CS"/>
</dbReference>
<dbReference type="InterPro" id="IPR014721">
    <property type="entry name" value="Ribsml_uS5_D2-typ_fold_subgr"/>
</dbReference>
<dbReference type="NCBIfam" id="NF001099">
    <property type="entry name" value="PRK00132.1"/>
    <property type="match status" value="1"/>
</dbReference>
<dbReference type="PANTHER" id="PTHR21569">
    <property type="entry name" value="RIBOSOMAL PROTEIN S9"/>
    <property type="match status" value="1"/>
</dbReference>
<dbReference type="PANTHER" id="PTHR21569:SF1">
    <property type="entry name" value="SMALL RIBOSOMAL SUBUNIT PROTEIN US9M"/>
    <property type="match status" value="1"/>
</dbReference>
<dbReference type="Pfam" id="PF00380">
    <property type="entry name" value="Ribosomal_S9"/>
    <property type="match status" value="1"/>
</dbReference>
<dbReference type="SUPFAM" id="SSF54211">
    <property type="entry name" value="Ribosomal protein S5 domain 2-like"/>
    <property type="match status" value="1"/>
</dbReference>
<dbReference type="PROSITE" id="PS00360">
    <property type="entry name" value="RIBOSOMAL_S9"/>
    <property type="match status" value="1"/>
</dbReference>
<feature type="chain" id="PRO_1000128197" description="Small ribosomal subunit protein uS9">
    <location>
        <begin position="1"/>
        <end position="160"/>
    </location>
</feature>